<proteinExistence type="evidence at protein level"/>
<sequence length="327" mass="38178">MSFLGGLFGPVCEIDVILNDAESRKTAELKTEEGKLEKHYLFYDGESVSGKVNINVKQTSKRLEHQGIRIEFVGQIELFSDKSNTHEFVNLVKELALPGELTQNRSYDFEFMQVEKPYESYVGANVRLRYFLKVTIVRRLSDLVKEYDLIVHQLATYPDVNNSIKMEVGIEDCLHIEFEYNKSKYHLKDVIVGKIYFLLVRIKIQHMELQLIKKEMTGIGPSTTTETETVAKYEIMDGAPVKGESIPIRLFLAGYDLTPTMRDVNKKFSVRYFLNLVLVDEEDRRYFKQQEIVLWRKAPEKMRKRNFHQRYESPEPRPSLSAEQPEM</sequence>
<name>VP26A_DANRE</name>
<comment type="function">
    <text evidence="1">Acts as a component of the retromer cargo-selective complex (CSC). The CSC is believed to be the core functional component of retromer or respective retromer complex variants acting to prevent missorting of selected transmembrane cargo proteins into the lysosomal degradation pathway. Retromer mediates retrograde transport of cargo proteins from endosomes to the trans-Golgi network (TGN) (By similarity).</text>
</comment>
<comment type="subunit">
    <text evidence="1">Component of the heterotrimeric retromer cargo-selective complex (CSC) which is believed to associate with variable sorting nexins to form functionally distinct retromer complex variants (By similarity).</text>
</comment>
<comment type="subcellular location">
    <subcellularLocation>
        <location evidence="2">Cytoplasm</location>
    </subcellularLocation>
    <subcellularLocation>
        <location evidence="2">Endosome membrane</location>
        <topology evidence="2">Peripheral membrane protein</topology>
    </subcellularLocation>
    <subcellularLocation>
        <location evidence="1">Early endosome</location>
    </subcellularLocation>
    <text evidence="1">Localizes to tubular profiles adjacent to endosomes.</text>
</comment>
<comment type="similarity">
    <text evidence="4">Belongs to the VPS26 family.</text>
</comment>
<protein>
    <recommendedName>
        <fullName>Vacuolar protein sorting-associated protein 26A</fullName>
    </recommendedName>
    <alternativeName>
        <fullName>Vesicle protein sorting 26A</fullName>
    </alternativeName>
</protein>
<keyword id="KW-0002">3D-structure</keyword>
<keyword id="KW-0963">Cytoplasm</keyword>
<keyword id="KW-0967">Endosome</keyword>
<keyword id="KW-0472">Membrane</keyword>
<keyword id="KW-0653">Protein transport</keyword>
<keyword id="KW-1185">Reference proteome</keyword>
<keyword id="KW-0813">Transport</keyword>
<gene>
    <name type="primary">vps26a</name>
    <name type="ORF">zgc:56673</name>
</gene>
<feature type="chain" id="PRO_0000247085" description="Vacuolar protein sorting-associated protein 26A">
    <location>
        <begin position="1"/>
        <end position="327"/>
    </location>
</feature>
<feature type="region of interest" description="Disordered" evidence="3">
    <location>
        <begin position="305"/>
        <end position="327"/>
    </location>
</feature>
<feature type="sequence conflict" description="In Ref. 2; AAH49342." evidence="4" ref="2">
    <original>V</original>
    <variation>A</variation>
    <location>
        <position position="11"/>
    </location>
</feature>
<feature type="sequence conflict" description="In Ref. 2; AAH49342." evidence="4" ref="2">
    <original>D</original>
    <variation>E</variation>
    <location>
        <position position="237"/>
    </location>
</feature>
<feature type="strand" evidence="5">
    <location>
        <begin position="13"/>
        <end position="18"/>
    </location>
</feature>
<feature type="turn" evidence="5">
    <location>
        <begin position="19"/>
        <end position="23"/>
    </location>
</feature>
<feature type="strand" evidence="5">
    <location>
        <begin position="26"/>
        <end position="30"/>
    </location>
</feature>
<feature type="strand" evidence="5">
    <location>
        <begin position="36"/>
        <end position="42"/>
    </location>
</feature>
<feature type="strand" evidence="5">
    <location>
        <begin position="48"/>
        <end position="55"/>
    </location>
</feature>
<feature type="strand" evidence="5">
    <location>
        <begin position="64"/>
        <end position="66"/>
    </location>
</feature>
<feature type="strand" evidence="5">
    <location>
        <begin position="68"/>
        <end position="78"/>
    </location>
</feature>
<feature type="turn" evidence="5">
    <location>
        <begin position="79"/>
        <end position="82"/>
    </location>
</feature>
<feature type="strand" evidence="5">
    <location>
        <begin position="84"/>
        <end position="96"/>
    </location>
</feature>
<feature type="strand" evidence="5">
    <location>
        <begin position="98"/>
        <end position="100"/>
    </location>
</feature>
<feature type="strand" evidence="5">
    <location>
        <begin position="103"/>
        <end position="111"/>
    </location>
</feature>
<feature type="strand" evidence="5">
    <location>
        <begin position="124"/>
        <end position="136"/>
    </location>
</feature>
<feature type="strand" evidence="5">
    <location>
        <begin position="143"/>
        <end position="151"/>
    </location>
</feature>
<feature type="strand" evidence="5">
    <location>
        <begin position="164"/>
        <end position="170"/>
    </location>
</feature>
<feature type="turn" evidence="5">
    <location>
        <begin position="171"/>
        <end position="173"/>
    </location>
</feature>
<feature type="strand" evidence="5">
    <location>
        <begin position="174"/>
        <end position="181"/>
    </location>
</feature>
<feature type="strand" evidence="5">
    <location>
        <begin position="183"/>
        <end position="186"/>
    </location>
</feature>
<feature type="strand" evidence="5">
    <location>
        <begin position="190"/>
        <end position="200"/>
    </location>
</feature>
<feature type="strand" evidence="5">
    <location>
        <begin position="205"/>
        <end position="219"/>
    </location>
</feature>
<feature type="helix" evidence="5">
    <location>
        <begin position="220"/>
        <end position="222"/>
    </location>
</feature>
<feature type="strand" evidence="5">
    <location>
        <begin position="224"/>
        <end position="233"/>
    </location>
</feature>
<feature type="strand" evidence="5">
    <location>
        <begin position="246"/>
        <end position="251"/>
    </location>
</feature>
<feature type="helix" evidence="5">
    <location>
        <begin position="252"/>
        <end position="254"/>
    </location>
</feature>
<feature type="helix" evidence="5">
    <location>
        <begin position="264"/>
        <end position="266"/>
    </location>
</feature>
<feature type="strand" evidence="5">
    <location>
        <begin position="267"/>
        <end position="279"/>
    </location>
</feature>
<feature type="strand" evidence="5">
    <location>
        <begin position="286"/>
        <end position="295"/>
    </location>
</feature>
<evidence type="ECO:0000250" key="1">
    <source>
        <dbReference type="UniProtKB" id="O75436"/>
    </source>
</evidence>
<evidence type="ECO:0000250" key="2">
    <source>
        <dbReference type="UniProtKB" id="P40336"/>
    </source>
</evidence>
<evidence type="ECO:0000256" key="3">
    <source>
        <dbReference type="SAM" id="MobiDB-lite"/>
    </source>
</evidence>
<evidence type="ECO:0000305" key="4"/>
<evidence type="ECO:0007829" key="5">
    <source>
        <dbReference type="PDB" id="6MD5"/>
    </source>
</evidence>
<reference key="1">
    <citation type="journal article" date="2004" name="Proc. Natl. Acad. Sci. U.S.A.">
        <title>Hematopoietic gene expression profile in zebrafish kidney marrow.</title>
        <authorList>
            <person name="Song H.-D."/>
            <person name="Sun X.-J."/>
            <person name="Deng M."/>
            <person name="Zhang G.-W."/>
            <person name="Zhou Y."/>
            <person name="Wu X.-Y."/>
            <person name="Sheng Y."/>
            <person name="Chen Y."/>
            <person name="Ruan Z."/>
            <person name="Jiang C.-L."/>
            <person name="Fan H.-Y."/>
            <person name="Zon L.I."/>
            <person name="Kanki J.P."/>
            <person name="Liu T.X."/>
            <person name="Look A.T."/>
            <person name="Chen Z."/>
        </authorList>
    </citation>
    <scope>NUCLEOTIDE SEQUENCE [LARGE SCALE MRNA]</scope>
    <source>
        <tissue>Kidney marrow</tissue>
    </source>
</reference>
<reference key="2">
    <citation type="submission" date="2004-06" db="EMBL/GenBank/DDBJ databases">
        <authorList>
            <consortium name="NIH - Zebrafish Gene Collection (ZGC) project"/>
        </authorList>
    </citation>
    <scope>NUCLEOTIDE SEQUENCE [LARGE SCALE MRNA]</scope>
    <source>
        <tissue>Embryo</tissue>
    </source>
</reference>
<dbReference type="EMBL" id="AY391469">
    <property type="protein sequence ID" value="AAQ91281.1"/>
    <property type="molecule type" value="mRNA"/>
</dbReference>
<dbReference type="EMBL" id="BC049342">
    <property type="protein sequence ID" value="AAH49342.1"/>
    <property type="molecule type" value="mRNA"/>
</dbReference>
<dbReference type="EMBL" id="BC071350">
    <property type="protein sequence ID" value="AAH71350.1"/>
    <property type="molecule type" value="mRNA"/>
</dbReference>
<dbReference type="RefSeq" id="NP_957201.1">
    <property type="nucleotide sequence ID" value="NM_200907.1"/>
</dbReference>
<dbReference type="PDB" id="6MD5">
    <property type="method" value="X-ray"/>
    <property type="resolution" value="1.70 A"/>
    <property type="chains" value="A=9-327"/>
</dbReference>
<dbReference type="PDBsum" id="6MD5"/>
<dbReference type="SMR" id="Q6TNP8"/>
<dbReference type="FunCoup" id="Q6TNP8">
    <property type="interactions" value="2640"/>
</dbReference>
<dbReference type="STRING" id="7955.ENSDARP00000072602"/>
<dbReference type="PaxDb" id="7955-ENSDARP00000072602"/>
<dbReference type="DNASU" id="393881"/>
<dbReference type="Ensembl" id="ENSDART00000078140">
    <property type="protein sequence ID" value="ENSDARP00000072602"/>
    <property type="gene ID" value="ENSDARG00000056549"/>
</dbReference>
<dbReference type="GeneID" id="393881"/>
<dbReference type="KEGG" id="dre:393881"/>
<dbReference type="AGR" id="ZFIN:ZDB-GENE-040426-1108"/>
<dbReference type="CTD" id="9559"/>
<dbReference type="ZFIN" id="ZDB-GENE-040426-1108">
    <property type="gene designation" value="vps26a"/>
</dbReference>
<dbReference type="eggNOG" id="KOG3063">
    <property type="taxonomic scope" value="Eukaryota"/>
</dbReference>
<dbReference type="HOGENOM" id="CLU_031077_0_0_1"/>
<dbReference type="InParanoid" id="Q6TNP8"/>
<dbReference type="OMA" id="AGKVCIE"/>
<dbReference type="OrthoDB" id="3821113at2759"/>
<dbReference type="PhylomeDB" id="Q6TNP8"/>
<dbReference type="TreeFam" id="TF300907"/>
<dbReference type="PRO" id="PR:Q6TNP8"/>
<dbReference type="Proteomes" id="UP000000437">
    <property type="component" value="Alternate scaffold 13"/>
</dbReference>
<dbReference type="Proteomes" id="UP000000437">
    <property type="component" value="Chromosome 13"/>
</dbReference>
<dbReference type="Bgee" id="ENSDARG00000056549">
    <property type="expression patterns" value="Expressed in cleaving embryo and 28 other cell types or tissues"/>
</dbReference>
<dbReference type="ExpressionAtlas" id="Q6TNP8">
    <property type="expression patterns" value="baseline"/>
</dbReference>
<dbReference type="GO" id="GO:0005829">
    <property type="term" value="C:cytosol"/>
    <property type="evidence" value="ECO:0007669"/>
    <property type="project" value="GOC"/>
</dbReference>
<dbReference type="GO" id="GO:0005769">
    <property type="term" value="C:early endosome"/>
    <property type="evidence" value="ECO:0007669"/>
    <property type="project" value="UniProtKB-SubCell"/>
</dbReference>
<dbReference type="GO" id="GO:0005768">
    <property type="term" value="C:endosome"/>
    <property type="evidence" value="ECO:0000250"/>
    <property type="project" value="UniProtKB"/>
</dbReference>
<dbReference type="GO" id="GO:0010008">
    <property type="term" value="C:endosome membrane"/>
    <property type="evidence" value="ECO:0007669"/>
    <property type="project" value="UniProtKB-SubCell"/>
</dbReference>
<dbReference type="GO" id="GO:0030904">
    <property type="term" value="C:retromer complex"/>
    <property type="evidence" value="ECO:0000318"/>
    <property type="project" value="GO_Central"/>
</dbReference>
<dbReference type="GO" id="GO:0031982">
    <property type="term" value="C:vesicle"/>
    <property type="evidence" value="ECO:0000250"/>
    <property type="project" value="UniProtKB"/>
</dbReference>
<dbReference type="GO" id="GO:0006886">
    <property type="term" value="P:intracellular protein transport"/>
    <property type="evidence" value="ECO:0000318"/>
    <property type="project" value="GO_Central"/>
</dbReference>
<dbReference type="GO" id="GO:0042147">
    <property type="term" value="P:retrograde transport, endosome to Golgi"/>
    <property type="evidence" value="ECO:0000318"/>
    <property type="project" value="GO_Central"/>
</dbReference>
<dbReference type="FunFam" id="2.60.40.640:FF:000001">
    <property type="entry name" value="Vacuolar protein sorting-associated protein 26A"/>
    <property type="match status" value="1"/>
</dbReference>
<dbReference type="FunFam" id="2.60.40.640:FF:000002">
    <property type="entry name" value="Vacuolar protein sorting-associated protein 26A"/>
    <property type="match status" value="1"/>
</dbReference>
<dbReference type="Gene3D" id="2.60.40.640">
    <property type="match status" value="2"/>
</dbReference>
<dbReference type="InterPro" id="IPR014752">
    <property type="entry name" value="Arrestin-like_C"/>
</dbReference>
<dbReference type="InterPro" id="IPR028934">
    <property type="entry name" value="Vps26-related"/>
</dbReference>
<dbReference type="PANTHER" id="PTHR12233">
    <property type="entry name" value="VACUOLAR PROTEIN SORTING 26 RELATED"/>
    <property type="match status" value="1"/>
</dbReference>
<dbReference type="Pfam" id="PF03643">
    <property type="entry name" value="Vps26"/>
    <property type="match status" value="1"/>
</dbReference>
<accession>Q6TNP8</accession>
<accession>Q7ZUB5</accession>
<organism>
    <name type="scientific">Danio rerio</name>
    <name type="common">Zebrafish</name>
    <name type="synonym">Brachydanio rerio</name>
    <dbReference type="NCBI Taxonomy" id="7955"/>
    <lineage>
        <taxon>Eukaryota</taxon>
        <taxon>Metazoa</taxon>
        <taxon>Chordata</taxon>
        <taxon>Craniata</taxon>
        <taxon>Vertebrata</taxon>
        <taxon>Euteleostomi</taxon>
        <taxon>Actinopterygii</taxon>
        <taxon>Neopterygii</taxon>
        <taxon>Teleostei</taxon>
        <taxon>Ostariophysi</taxon>
        <taxon>Cypriniformes</taxon>
        <taxon>Danionidae</taxon>
        <taxon>Danioninae</taxon>
        <taxon>Danio</taxon>
    </lineage>
</organism>